<evidence type="ECO:0000255" key="1">
    <source>
        <dbReference type="HAMAP-Rule" id="MF_00303"/>
    </source>
</evidence>
<feature type="chain" id="PRO_1000022669" description="Trigger factor">
    <location>
        <begin position="1"/>
        <end position="430"/>
    </location>
</feature>
<feature type="domain" description="PPIase FKBP-type" evidence="1">
    <location>
        <begin position="163"/>
        <end position="248"/>
    </location>
</feature>
<name>TIG_CLOBH</name>
<keyword id="KW-0131">Cell cycle</keyword>
<keyword id="KW-0132">Cell division</keyword>
<keyword id="KW-0143">Chaperone</keyword>
<keyword id="KW-0963">Cytoplasm</keyword>
<keyword id="KW-0413">Isomerase</keyword>
<keyword id="KW-1185">Reference proteome</keyword>
<keyword id="KW-0697">Rotamase</keyword>
<proteinExistence type="inferred from homology"/>
<organism>
    <name type="scientific">Clostridium botulinum (strain Hall / ATCC 3502 / NCTC 13319 / Type A)</name>
    <dbReference type="NCBI Taxonomy" id="441771"/>
    <lineage>
        <taxon>Bacteria</taxon>
        <taxon>Bacillati</taxon>
        <taxon>Bacillota</taxon>
        <taxon>Clostridia</taxon>
        <taxon>Eubacteriales</taxon>
        <taxon>Clostridiaceae</taxon>
        <taxon>Clostridium</taxon>
    </lineage>
</organism>
<reference key="1">
    <citation type="journal article" date="2007" name="Genome Res.">
        <title>Genome sequence of a proteolytic (Group I) Clostridium botulinum strain Hall A and comparative analysis of the clostridial genomes.</title>
        <authorList>
            <person name="Sebaihia M."/>
            <person name="Peck M.W."/>
            <person name="Minton N.P."/>
            <person name="Thomson N.R."/>
            <person name="Holden M.T.G."/>
            <person name="Mitchell W.J."/>
            <person name="Carter A.T."/>
            <person name="Bentley S.D."/>
            <person name="Mason D.R."/>
            <person name="Crossman L."/>
            <person name="Paul C.J."/>
            <person name="Ivens A."/>
            <person name="Wells-Bennik M.H.J."/>
            <person name="Davis I.J."/>
            <person name="Cerdeno-Tarraga A.M."/>
            <person name="Churcher C."/>
            <person name="Quail M.A."/>
            <person name="Chillingworth T."/>
            <person name="Feltwell T."/>
            <person name="Fraser A."/>
            <person name="Goodhead I."/>
            <person name="Hance Z."/>
            <person name="Jagels K."/>
            <person name="Larke N."/>
            <person name="Maddison M."/>
            <person name="Moule S."/>
            <person name="Mungall K."/>
            <person name="Norbertczak H."/>
            <person name="Rabbinowitsch E."/>
            <person name="Sanders M."/>
            <person name="Simmonds M."/>
            <person name="White B."/>
            <person name="Whithead S."/>
            <person name="Parkhill J."/>
        </authorList>
    </citation>
    <scope>NUCLEOTIDE SEQUENCE [LARGE SCALE GENOMIC DNA]</scope>
    <source>
        <strain>Hall / ATCC 3502 / NCTC 13319 / Type A</strain>
    </source>
</reference>
<reference key="2">
    <citation type="journal article" date="2007" name="PLoS ONE">
        <title>Analysis of the neurotoxin complex genes in Clostridium botulinum A1-A4 and B1 strains: BoNT/A3, /Ba4 and /B1 clusters are located within plasmids.</title>
        <authorList>
            <person name="Smith T.J."/>
            <person name="Hill K.K."/>
            <person name="Foley B.T."/>
            <person name="Detter J.C."/>
            <person name="Munk A.C."/>
            <person name="Bruce D.C."/>
            <person name="Doggett N.A."/>
            <person name="Smith L.A."/>
            <person name="Marks J.D."/>
            <person name="Xie G."/>
            <person name="Brettin T.S."/>
        </authorList>
    </citation>
    <scope>NUCLEOTIDE SEQUENCE [LARGE SCALE GENOMIC DNA]</scope>
    <source>
        <strain>Hall / ATCC 3502 / NCTC 13319 / Type A</strain>
    </source>
</reference>
<sequence length="430" mass="48924">MNVKVENIEKNVVKLEITVDSEKFNEAVKKSFKKNAKRFNVPGFRKGKAPLNIIKKYYGEGVLFEDAINFCCEDTYPKAIEENNIKPVDYPQIDVVQIGEGKDFIYTAEVTTVPEVKLGEYKGVEVKKVSYEVEDEAVENELKSMQEKNARVSLKEEGEIEKGNIAIIDFKGYVDGKAFEGGEAKDYEIEIGSGTFIGDFEDQLVGLKKDESKEVNVSFPEEYGREDLNGKPATFEVTIKDIKVKELPALDDEFAKEVSEFDTLEELKSDIKDRMKKELSEKAKAEYEEAVVEAVGANAEIEIPKVMIEKEIENMVRDLEMRLKYQGLDLKSYYEFTNSSEEKVKEYMRETAEKRVKTDLIMQEIAKVEDIKATEEELKEKAMEVAKQYGQKDVEKTAELIANAQKAYLEIDIVNGKVLDLLVESSKEIA</sequence>
<comment type="function">
    <text evidence="1">Involved in protein export. Acts as a chaperone by maintaining the newly synthesized protein in an open conformation. Functions as a peptidyl-prolyl cis-trans isomerase.</text>
</comment>
<comment type="catalytic activity">
    <reaction evidence="1">
        <text>[protein]-peptidylproline (omega=180) = [protein]-peptidylproline (omega=0)</text>
        <dbReference type="Rhea" id="RHEA:16237"/>
        <dbReference type="Rhea" id="RHEA-COMP:10747"/>
        <dbReference type="Rhea" id="RHEA-COMP:10748"/>
        <dbReference type="ChEBI" id="CHEBI:83833"/>
        <dbReference type="ChEBI" id="CHEBI:83834"/>
        <dbReference type="EC" id="5.2.1.8"/>
    </reaction>
</comment>
<comment type="subcellular location">
    <subcellularLocation>
        <location>Cytoplasm</location>
    </subcellularLocation>
    <text evidence="1">About half TF is bound to the ribosome near the polypeptide exit tunnel while the other half is free in the cytoplasm.</text>
</comment>
<comment type="domain">
    <text evidence="1">Consists of 3 domains; the N-terminus binds the ribosome, the middle domain has PPIase activity, while the C-terminus has intrinsic chaperone activity on its own.</text>
</comment>
<comment type="similarity">
    <text evidence="1">Belongs to the FKBP-type PPIase family. Tig subfamily.</text>
</comment>
<dbReference type="EC" id="5.2.1.8" evidence="1"/>
<dbReference type="EMBL" id="CP000727">
    <property type="protein sequence ID" value="ABS37493.1"/>
    <property type="molecule type" value="Genomic_DNA"/>
</dbReference>
<dbReference type="EMBL" id="AM412317">
    <property type="protein sequence ID" value="CAL84794.1"/>
    <property type="molecule type" value="Genomic_DNA"/>
</dbReference>
<dbReference type="RefSeq" id="WP_012048204.1">
    <property type="nucleotide sequence ID" value="NC_009698.1"/>
</dbReference>
<dbReference type="RefSeq" id="YP_001255722.1">
    <property type="nucleotide sequence ID" value="NC_009495.1"/>
</dbReference>
<dbReference type="RefSeq" id="YP_001388962.1">
    <property type="nucleotide sequence ID" value="NC_009698.1"/>
</dbReference>
<dbReference type="SMR" id="A5I6W2"/>
<dbReference type="GeneID" id="5185113"/>
<dbReference type="KEGG" id="cbh:CLC_3143"/>
<dbReference type="KEGG" id="cbo:CBO3232"/>
<dbReference type="PATRIC" id="fig|413999.7.peg.3211"/>
<dbReference type="HOGENOM" id="CLU_033058_3_2_9"/>
<dbReference type="PRO" id="PR:A5I6W2"/>
<dbReference type="Proteomes" id="UP000001986">
    <property type="component" value="Chromosome"/>
</dbReference>
<dbReference type="GO" id="GO:0005737">
    <property type="term" value="C:cytoplasm"/>
    <property type="evidence" value="ECO:0007669"/>
    <property type="project" value="UniProtKB-SubCell"/>
</dbReference>
<dbReference type="GO" id="GO:0003755">
    <property type="term" value="F:peptidyl-prolyl cis-trans isomerase activity"/>
    <property type="evidence" value="ECO:0000318"/>
    <property type="project" value="GO_Central"/>
</dbReference>
<dbReference type="GO" id="GO:0044183">
    <property type="term" value="F:protein folding chaperone"/>
    <property type="evidence" value="ECO:0000318"/>
    <property type="project" value="GO_Central"/>
</dbReference>
<dbReference type="GO" id="GO:0043022">
    <property type="term" value="F:ribosome binding"/>
    <property type="evidence" value="ECO:0000318"/>
    <property type="project" value="GO_Central"/>
</dbReference>
<dbReference type="GO" id="GO:0051083">
    <property type="term" value="P:'de novo' cotranslational protein folding"/>
    <property type="evidence" value="ECO:0000318"/>
    <property type="project" value="GO_Central"/>
</dbReference>
<dbReference type="GO" id="GO:0051301">
    <property type="term" value="P:cell division"/>
    <property type="evidence" value="ECO:0007669"/>
    <property type="project" value="UniProtKB-KW"/>
</dbReference>
<dbReference type="GO" id="GO:0061077">
    <property type="term" value="P:chaperone-mediated protein folding"/>
    <property type="evidence" value="ECO:0000318"/>
    <property type="project" value="GO_Central"/>
</dbReference>
<dbReference type="GO" id="GO:0015031">
    <property type="term" value="P:protein transport"/>
    <property type="evidence" value="ECO:0007669"/>
    <property type="project" value="UniProtKB-UniRule"/>
</dbReference>
<dbReference type="GO" id="GO:0043335">
    <property type="term" value="P:protein unfolding"/>
    <property type="evidence" value="ECO:0000318"/>
    <property type="project" value="GO_Central"/>
</dbReference>
<dbReference type="FunFam" id="1.10.3120.10:FF:000010">
    <property type="entry name" value="Trigger factor"/>
    <property type="match status" value="1"/>
</dbReference>
<dbReference type="FunFam" id="3.10.50.40:FF:000001">
    <property type="entry name" value="Trigger factor"/>
    <property type="match status" value="1"/>
</dbReference>
<dbReference type="Gene3D" id="3.10.50.40">
    <property type="match status" value="1"/>
</dbReference>
<dbReference type="Gene3D" id="3.30.70.1050">
    <property type="entry name" value="Trigger factor ribosome-binding domain"/>
    <property type="match status" value="1"/>
</dbReference>
<dbReference type="Gene3D" id="1.10.3120.10">
    <property type="entry name" value="Trigger factor, C-terminal domain"/>
    <property type="match status" value="1"/>
</dbReference>
<dbReference type="HAMAP" id="MF_00303">
    <property type="entry name" value="Trigger_factor_Tig"/>
    <property type="match status" value="1"/>
</dbReference>
<dbReference type="InterPro" id="IPR046357">
    <property type="entry name" value="PPIase_dom_sf"/>
</dbReference>
<dbReference type="InterPro" id="IPR001179">
    <property type="entry name" value="PPIase_FKBP_dom"/>
</dbReference>
<dbReference type="InterPro" id="IPR005215">
    <property type="entry name" value="Trig_fac"/>
</dbReference>
<dbReference type="InterPro" id="IPR008880">
    <property type="entry name" value="Trigger_fac_C"/>
</dbReference>
<dbReference type="InterPro" id="IPR037041">
    <property type="entry name" value="Trigger_fac_C_sf"/>
</dbReference>
<dbReference type="InterPro" id="IPR008881">
    <property type="entry name" value="Trigger_fac_ribosome-bd_bac"/>
</dbReference>
<dbReference type="InterPro" id="IPR036611">
    <property type="entry name" value="Trigger_fac_ribosome-bd_sf"/>
</dbReference>
<dbReference type="InterPro" id="IPR027304">
    <property type="entry name" value="Trigger_fact/SurA_dom_sf"/>
</dbReference>
<dbReference type="NCBIfam" id="TIGR00115">
    <property type="entry name" value="tig"/>
    <property type="match status" value="1"/>
</dbReference>
<dbReference type="PANTHER" id="PTHR30560">
    <property type="entry name" value="TRIGGER FACTOR CHAPERONE AND PEPTIDYL-PROLYL CIS/TRANS ISOMERASE"/>
    <property type="match status" value="1"/>
</dbReference>
<dbReference type="PANTHER" id="PTHR30560:SF3">
    <property type="entry name" value="TRIGGER FACTOR-LIKE PROTEIN TIG, CHLOROPLASTIC"/>
    <property type="match status" value="1"/>
</dbReference>
<dbReference type="Pfam" id="PF00254">
    <property type="entry name" value="FKBP_C"/>
    <property type="match status" value="1"/>
</dbReference>
<dbReference type="Pfam" id="PF05698">
    <property type="entry name" value="Trigger_C"/>
    <property type="match status" value="1"/>
</dbReference>
<dbReference type="Pfam" id="PF05697">
    <property type="entry name" value="Trigger_N"/>
    <property type="match status" value="1"/>
</dbReference>
<dbReference type="PIRSF" id="PIRSF003095">
    <property type="entry name" value="Trigger_factor"/>
    <property type="match status" value="1"/>
</dbReference>
<dbReference type="SUPFAM" id="SSF54534">
    <property type="entry name" value="FKBP-like"/>
    <property type="match status" value="1"/>
</dbReference>
<dbReference type="SUPFAM" id="SSF109998">
    <property type="entry name" value="Triger factor/SurA peptide-binding domain-like"/>
    <property type="match status" value="1"/>
</dbReference>
<dbReference type="SUPFAM" id="SSF102735">
    <property type="entry name" value="Trigger factor ribosome-binding domain"/>
    <property type="match status" value="1"/>
</dbReference>
<dbReference type="PROSITE" id="PS50059">
    <property type="entry name" value="FKBP_PPIASE"/>
    <property type="match status" value="1"/>
</dbReference>
<accession>A5I6W2</accession>
<accession>A7G847</accession>
<protein>
    <recommendedName>
        <fullName evidence="1">Trigger factor</fullName>
        <shortName evidence="1">TF</shortName>
        <ecNumber evidence="1">5.2.1.8</ecNumber>
    </recommendedName>
    <alternativeName>
        <fullName evidence="1">PPIase</fullName>
    </alternativeName>
</protein>
<gene>
    <name evidence="1" type="primary">tig</name>
    <name type="ordered locus">CBO3232</name>
    <name type="ordered locus">CLC_3143</name>
</gene>